<proteinExistence type="evidence at transcript level"/>
<evidence type="ECO:0000250" key="1"/>
<evidence type="ECO:0000255" key="2"/>
<evidence type="ECO:0000305" key="3"/>
<keyword id="KW-0052">Apoplast</keyword>
<keyword id="KW-0186">Copper</keyword>
<keyword id="KW-0325">Glycoprotein</keyword>
<keyword id="KW-0439">Lignin degradation</keyword>
<keyword id="KW-0479">Metal-binding</keyword>
<keyword id="KW-0560">Oxidoreductase</keyword>
<keyword id="KW-1185">Reference proteome</keyword>
<keyword id="KW-0677">Repeat</keyword>
<keyword id="KW-0964">Secreted</keyword>
<keyword id="KW-0732">Signal</keyword>
<gene>
    <name type="primary">LAC2</name>
    <name type="ordered locus">Os01g0634500</name>
    <name type="ordered locus">LOC_Os01g44330</name>
    <name type="ORF">OsJ_002637</name>
    <name type="ORF">P0663E10.27</name>
</gene>
<reference key="1">
    <citation type="journal article" date="2002" name="Nature">
        <title>The genome sequence and structure of rice chromosome 1.</title>
        <authorList>
            <person name="Sasaki T."/>
            <person name="Matsumoto T."/>
            <person name="Yamamoto K."/>
            <person name="Sakata K."/>
            <person name="Baba T."/>
            <person name="Katayose Y."/>
            <person name="Wu J."/>
            <person name="Niimura Y."/>
            <person name="Cheng Z."/>
            <person name="Nagamura Y."/>
            <person name="Antonio B.A."/>
            <person name="Kanamori H."/>
            <person name="Hosokawa S."/>
            <person name="Masukawa M."/>
            <person name="Arikawa K."/>
            <person name="Chiden Y."/>
            <person name="Hayashi M."/>
            <person name="Okamoto M."/>
            <person name="Ando T."/>
            <person name="Aoki H."/>
            <person name="Arita K."/>
            <person name="Hamada M."/>
            <person name="Harada C."/>
            <person name="Hijishita S."/>
            <person name="Honda M."/>
            <person name="Ichikawa Y."/>
            <person name="Idonuma A."/>
            <person name="Iijima M."/>
            <person name="Ikeda M."/>
            <person name="Ikeno M."/>
            <person name="Ito S."/>
            <person name="Ito T."/>
            <person name="Ito Y."/>
            <person name="Ito Y."/>
            <person name="Iwabuchi A."/>
            <person name="Kamiya K."/>
            <person name="Karasawa W."/>
            <person name="Katagiri S."/>
            <person name="Kikuta A."/>
            <person name="Kobayashi N."/>
            <person name="Kono I."/>
            <person name="Machita K."/>
            <person name="Maehara T."/>
            <person name="Mizuno H."/>
            <person name="Mizubayashi T."/>
            <person name="Mukai Y."/>
            <person name="Nagasaki H."/>
            <person name="Nakashima M."/>
            <person name="Nakama Y."/>
            <person name="Nakamichi Y."/>
            <person name="Nakamura M."/>
            <person name="Namiki N."/>
            <person name="Negishi M."/>
            <person name="Ohta I."/>
            <person name="Ono N."/>
            <person name="Saji S."/>
            <person name="Sakai K."/>
            <person name="Shibata M."/>
            <person name="Shimokawa T."/>
            <person name="Shomura A."/>
            <person name="Song J."/>
            <person name="Takazaki Y."/>
            <person name="Terasawa K."/>
            <person name="Tsuji K."/>
            <person name="Waki K."/>
            <person name="Yamagata H."/>
            <person name="Yamane H."/>
            <person name="Yoshiki S."/>
            <person name="Yoshihara R."/>
            <person name="Yukawa K."/>
            <person name="Zhong H."/>
            <person name="Iwama H."/>
            <person name="Endo T."/>
            <person name="Ito H."/>
            <person name="Hahn J.H."/>
            <person name="Kim H.-I."/>
            <person name="Eun M.-Y."/>
            <person name="Yano M."/>
            <person name="Jiang J."/>
            <person name="Gojobori T."/>
        </authorList>
    </citation>
    <scope>NUCLEOTIDE SEQUENCE [LARGE SCALE GENOMIC DNA]</scope>
    <source>
        <strain>cv. Nipponbare</strain>
    </source>
</reference>
<reference key="2">
    <citation type="journal article" date="2005" name="Nature">
        <title>The map-based sequence of the rice genome.</title>
        <authorList>
            <consortium name="International rice genome sequencing project (IRGSP)"/>
        </authorList>
    </citation>
    <scope>NUCLEOTIDE SEQUENCE [LARGE SCALE GENOMIC DNA]</scope>
    <source>
        <strain>cv. Nipponbare</strain>
    </source>
</reference>
<reference key="3">
    <citation type="journal article" date="2013" name="Rice">
        <title>Improvement of the Oryza sativa Nipponbare reference genome using next generation sequence and optical map data.</title>
        <authorList>
            <person name="Kawahara Y."/>
            <person name="de la Bastide M."/>
            <person name="Hamilton J.P."/>
            <person name="Kanamori H."/>
            <person name="McCombie W.R."/>
            <person name="Ouyang S."/>
            <person name="Schwartz D.C."/>
            <person name="Tanaka T."/>
            <person name="Wu J."/>
            <person name="Zhou S."/>
            <person name="Childs K.L."/>
            <person name="Davidson R.M."/>
            <person name="Lin H."/>
            <person name="Quesada-Ocampo L."/>
            <person name="Vaillancourt B."/>
            <person name="Sakai H."/>
            <person name="Lee S.S."/>
            <person name="Kim J."/>
            <person name="Numa H."/>
            <person name="Itoh T."/>
            <person name="Buell C.R."/>
            <person name="Matsumoto T."/>
        </authorList>
    </citation>
    <scope>GENOME REANNOTATION</scope>
    <source>
        <strain>cv. Nipponbare</strain>
    </source>
</reference>
<reference key="4">
    <citation type="journal article" date="2005" name="PLoS Biol.">
        <title>The genomes of Oryza sativa: a history of duplications.</title>
        <authorList>
            <person name="Yu J."/>
            <person name="Wang J."/>
            <person name="Lin W."/>
            <person name="Li S."/>
            <person name="Li H."/>
            <person name="Zhou J."/>
            <person name="Ni P."/>
            <person name="Dong W."/>
            <person name="Hu S."/>
            <person name="Zeng C."/>
            <person name="Zhang J."/>
            <person name="Zhang Y."/>
            <person name="Li R."/>
            <person name="Xu Z."/>
            <person name="Li S."/>
            <person name="Li X."/>
            <person name="Zheng H."/>
            <person name="Cong L."/>
            <person name="Lin L."/>
            <person name="Yin J."/>
            <person name="Geng J."/>
            <person name="Li G."/>
            <person name="Shi J."/>
            <person name="Liu J."/>
            <person name="Lv H."/>
            <person name="Li J."/>
            <person name="Wang J."/>
            <person name="Deng Y."/>
            <person name="Ran L."/>
            <person name="Shi X."/>
            <person name="Wang X."/>
            <person name="Wu Q."/>
            <person name="Li C."/>
            <person name="Ren X."/>
            <person name="Wang J."/>
            <person name="Wang X."/>
            <person name="Li D."/>
            <person name="Liu D."/>
            <person name="Zhang X."/>
            <person name="Ji Z."/>
            <person name="Zhao W."/>
            <person name="Sun Y."/>
            <person name="Zhang Z."/>
            <person name="Bao J."/>
            <person name="Han Y."/>
            <person name="Dong L."/>
            <person name="Ji J."/>
            <person name="Chen P."/>
            <person name="Wu S."/>
            <person name="Liu J."/>
            <person name="Xiao Y."/>
            <person name="Bu D."/>
            <person name="Tan J."/>
            <person name="Yang L."/>
            <person name="Ye C."/>
            <person name="Zhang J."/>
            <person name="Xu J."/>
            <person name="Zhou Y."/>
            <person name="Yu Y."/>
            <person name="Zhang B."/>
            <person name="Zhuang S."/>
            <person name="Wei H."/>
            <person name="Liu B."/>
            <person name="Lei M."/>
            <person name="Yu H."/>
            <person name="Li Y."/>
            <person name="Xu H."/>
            <person name="Wei S."/>
            <person name="He X."/>
            <person name="Fang L."/>
            <person name="Zhang Z."/>
            <person name="Zhang Y."/>
            <person name="Huang X."/>
            <person name="Su Z."/>
            <person name="Tong W."/>
            <person name="Li J."/>
            <person name="Tong Z."/>
            <person name="Li S."/>
            <person name="Ye J."/>
            <person name="Wang L."/>
            <person name="Fang L."/>
            <person name="Lei T."/>
            <person name="Chen C.-S."/>
            <person name="Chen H.-C."/>
            <person name="Xu Z."/>
            <person name="Li H."/>
            <person name="Huang H."/>
            <person name="Zhang F."/>
            <person name="Xu H."/>
            <person name="Li N."/>
            <person name="Zhao C."/>
            <person name="Li S."/>
            <person name="Dong L."/>
            <person name="Huang Y."/>
            <person name="Li L."/>
            <person name="Xi Y."/>
            <person name="Qi Q."/>
            <person name="Li W."/>
            <person name="Zhang B."/>
            <person name="Hu W."/>
            <person name="Zhang Y."/>
            <person name="Tian X."/>
            <person name="Jiao Y."/>
            <person name="Liang X."/>
            <person name="Jin J."/>
            <person name="Gao L."/>
            <person name="Zheng W."/>
            <person name="Hao B."/>
            <person name="Liu S.-M."/>
            <person name="Wang W."/>
            <person name="Yuan L."/>
            <person name="Cao M."/>
            <person name="McDermott J."/>
            <person name="Samudrala R."/>
            <person name="Wang J."/>
            <person name="Wong G.K.-S."/>
            <person name="Yang H."/>
        </authorList>
    </citation>
    <scope>NUCLEOTIDE SEQUENCE [LARGE SCALE GENOMIC DNA]</scope>
    <source>
        <strain>cv. Nipponbare</strain>
    </source>
</reference>
<feature type="signal peptide" evidence="2">
    <location>
        <begin position="1"/>
        <end position="26"/>
    </location>
</feature>
<feature type="chain" id="PRO_0000291887" description="Laccase-2">
    <location>
        <begin position="27"/>
        <end position="562"/>
    </location>
</feature>
<feature type="domain" description="Plastocyanin-like 1">
    <location>
        <begin position="34"/>
        <end position="150"/>
    </location>
</feature>
<feature type="domain" description="Plastocyanin-like 2">
    <location>
        <begin position="160"/>
        <end position="312"/>
    </location>
</feature>
<feature type="domain" description="Plastocyanin-like 3">
    <location>
        <begin position="411"/>
        <end position="546"/>
    </location>
</feature>
<feature type="binding site" evidence="1">
    <location>
        <position position="84"/>
    </location>
    <ligand>
        <name>Cu cation</name>
        <dbReference type="ChEBI" id="CHEBI:23378"/>
        <label>1</label>
    </ligand>
</feature>
<feature type="binding site" evidence="1">
    <location>
        <position position="86"/>
    </location>
    <ligand>
        <name>Cu cation</name>
        <dbReference type="ChEBI" id="CHEBI:23378"/>
        <label>2</label>
    </ligand>
</feature>
<feature type="binding site" evidence="1">
    <location>
        <position position="129"/>
    </location>
    <ligand>
        <name>Cu cation</name>
        <dbReference type="ChEBI" id="CHEBI:23378"/>
        <label>2</label>
    </ligand>
</feature>
<feature type="binding site" evidence="1">
    <location>
        <position position="131"/>
    </location>
    <ligand>
        <name>Cu cation</name>
        <dbReference type="ChEBI" id="CHEBI:23378"/>
        <label>3</label>
    </ligand>
</feature>
<feature type="binding site" evidence="1">
    <location>
        <position position="463"/>
    </location>
    <ligand>
        <name>Cu cation</name>
        <dbReference type="ChEBI" id="CHEBI:23378"/>
        <label>4</label>
    </ligand>
</feature>
<feature type="binding site" evidence="1">
    <location>
        <position position="466"/>
    </location>
    <ligand>
        <name>Cu cation</name>
        <dbReference type="ChEBI" id="CHEBI:23378"/>
        <label>1</label>
    </ligand>
</feature>
<feature type="binding site" evidence="1">
    <location>
        <position position="468"/>
    </location>
    <ligand>
        <name>Cu cation</name>
        <dbReference type="ChEBI" id="CHEBI:23378"/>
        <label>3</label>
    </ligand>
</feature>
<feature type="binding site" evidence="1">
    <location>
        <position position="525"/>
    </location>
    <ligand>
        <name>Cu cation</name>
        <dbReference type="ChEBI" id="CHEBI:23378"/>
        <label>3</label>
    </ligand>
</feature>
<feature type="binding site" evidence="1">
    <location>
        <position position="526"/>
    </location>
    <ligand>
        <name>Cu cation</name>
        <dbReference type="ChEBI" id="CHEBI:23378"/>
        <label>4</label>
    </ligand>
</feature>
<feature type="binding site" evidence="1">
    <location>
        <position position="527"/>
    </location>
    <ligand>
        <name>Cu cation</name>
        <dbReference type="ChEBI" id="CHEBI:23378"/>
        <label>2</label>
    </ligand>
</feature>
<feature type="binding site" evidence="1">
    <location>
        <position position="531"/>
    </location>
    <ligand>
        <name>Cu cation</name>
        <dbReference type="ChEBI" id="CHEBI:23378"/>
        <label>4</label>
    </ligand>
</feature>
<feature type="glycosylation site" description="N-linked (GlcNAc...) asparagine" evidence="2">
    <location>
        <position position="39"/>
    </location>
</feature>
<feature type="glycosylation site" description="N-linked (GlcNAc...) asparagine" evidence="2">
    <location>
        <position position="53"/>
    </location>
</feature>
<feature type="glycosylation site" description="N-linked (GlcNAc...) asparagine" evidence="2">
    <location>
        <position position="72"/>
    </location>
</feature>
<feature type="glycosylation site" description="N-linked (GlcNAc...) asparagine" evidence="2">
    <location>
        <position position="80"/>
    </location>
</feature>
<feature type="glycosylation site" description="N-linked (GlcNAc...) asparagine" evidence="2">
    <location>
        <position position="118"/>
    </location>
</feature>
<feature type="glycosylation site" description="N-linked (GlcNAc...) asparagine" evidence="2">
    <location>
        <position position="189"/>
    </location>
</feature>
<feature type="glycosylation site" description="N-linked (GlcNAc...) asparagine" evidence="2">
    <location>
        <position position="244"/>
    </location>
</feature>
<feature type="glycosylation site" description="N-linked (GlcNAc...) asparagine" evidence="2">
    <location>
        <position position="300"/>
    </location>
</feature>
<feature type="glycosylation site" description="N-linked (GlcNAc...) asparagine" evidence="2">
    <location>
        <position position="328"/>
    </location>
</feature>
<feature type="glycosylation site" description="N-linked (GlcNAc...) asparagine" evidence="2">
    <location>
        <position position="376"/>
    </location>
</feature>
<feature type="glycosylation site" description="N-linked (GlcNAc...) asparagine" evidence="2">
    <location>
        <position position="386"/>
    </location>
</feature>
<feature type="glycosylation site" description="N-linked (GlcNAc...) asparagine" evidence="2">
    <location>
        <position position="421"/>
    </location>
</feature>
<feature type="glycosylation site" description="N-linked (GlcNAc...) asparagine" evidence="2">
    <location>
        <position position="445"/>
    </location>
</feature>
<feature type="sequence conflict" description="In Ref. 4; EAZ12812." evidence="3" ref="4">
    <original>E</original>
    <variation>D</variation>
    <location>
        <position position="168"/>
    </location>
</feature>
<sequence length="562" mass="61296">MASAASSLPLLVSSLLLALFALGAHADVKRYQFDIVMSNVSRLCHEKAMVTVNGSYPGPTIYAREGDRVIVNVTNHVKHNMTIHWHGLKQRRNGWADGPAYVTQCPIGSGGSYVYDFNVTRQRGTLWWHAHIAWMRATVHGAIVILPAAGVPYPFPKPDDEAEIVLGEWWHADVETVERQGSMLGMAPNMSDAHTINGKPGPLVPFCSEKHTYALQVQSGKTYLLRIINAAVNDELFFSIAGHNMTVVEIDATYTKPFAASTVQLSPGQTMNVLVSADQSPGRYFMVAKPFNDVPIPADNKTATAILQYAGVPTSVVPALPQTMPATNSTGSVAAFHDKLRSLNSPRYPADVPLAVDRHLLYTIGLNIDPCETCLNRSRLAASLNNITFVMPRTALLQAHYYGQKGVFAADFPDRPPARFNYTGVPLTAGLGTSLGTRLSKIAYNATVELVLQDTNLLSVESHPFHLHGYNFFVVGRGVGNFDPAKDPAKYNLVDPPERNTVGVPAGGWTAIRFRADNPGVWFLHCHLEVHTSWGLKMAFLVEDGSGPDESVLPPPKDLPKC</sequence>
<dbReference type="EC" id="1.10.3.2"/>
<dbReference type="EMBL" id="AP004317">
    <property type="protein sequence ID" value="BAB90733.1"/>
    <property type="molecule type" value="Genomic_DNA"/>
</dbReference>
<dbReference type="EMBL" id="AP014957">
    <property type="status" value="NOT_ANNOTATED_CDS"/>
    <property type="molecule type" value="Genomic_DNA"/>
</dbReference>
<dbReference type="EMBL" id="CM000138">
    <property type="protein sequence ID" value="EAZ12812.1"/>
    <property type="molecule type" value="Genomic_DNA"/>
</dbReference>
<dbReference type="SMR" id="Q8RYM9"/>
<dbReference type="FunCoup" id="Q8RYM9">
    <property type="interactions" value="98"/>
</dbReference>
<dbReference type="STRING" id="39947.Q8RYM9"/>
<dbReference type="GlyCosmos" id="Q8RYM9">
    <property type="glycosylation" value="13 sites, No reported glycans"/>
</dbReference>
<dbReference type="PaxDb" id="39947-Q8RYM9"/>
<dbReference type="GeneID" id="107276614"/>
<dbReference type="KEGG" id="osa:107276614"/>
<dbReference type="eggNOG" id="KOG1263">
    <property type="taxonomic scope" value="Eukaryota"/>
</dbReference>
<dbReference type="HOGENOM" id="CLU_006504_6_3_1"/>
<dbReference type="InParanoid" id="Q8RYM9"/>
<dbReference type="OrthoDB" id="2121828at2759"/>
<dbReference type="Proteomes" id="UP000000763">
    <property type="component" value="Chromosome 1"/>
</dbReference>
<dbReference type="Proteomes" id="UP000007752">
    <property type="component" value="Chromosome 1"/>
</dbReference>
<dbReference type="Proteomes" id="UP000059680">
    <property type="component" value="Chromosome 1"/>
</dbReference>
<dbReference type="GO" id="GO:0048046">
    <property type="term" value="C:apoplast"/>
    <property type="evidence" value="ECO:0007669"/>
    <property type="project" value="UniProtKB-SubCell"/>
</dbReference>
<dbReference type="GO" id="GO:0005507">
    <property type="term" value="F:copper ion binding"/>
    <property type="evidence" value="ECO:0007669"/>
    <property type="project" value="InterPro"/>
</dbReference>
<dbReference type="GO" id="GO:0052716">
    <property type="term" value="F:hydroquinone:oxygen oxidoreductase activity"/>
    <property type="evidence" value="ECO:0007669"/>
    <property type="project" value="UniProtKB-EC"/>
</dbReference>
<dbReference type="GO" id="GO:0016491">
    <property type="term" value="F:oxidoreductase activity"/>
    <property type="evidence" value="ECO:0000318"/>
    <property type="project" value="GO_Central"/>
</dbReference>
<dbReference type="GO" id="GO:0046274">
    <property type="term" value="P:lignin catabolic process"/>
    <property type="evidence" value="ECO:0007669"/>
    <property type="project" value="UniProtKB-KW"/>
</dbReference>
<dbReference type="CDD" id="cd13849">
    <property type="entry name" value="CuRO_1_LCC_plant"/>
    <property type="match status" value="1"/>
</dbReference>
<dbReference type="CDD" id="cd13875">
    <property type="entry name" value="CuRO_2_LCC_plant"/>
    <property type="match status" value="1"/>
</dbReference>
<dbReference type="CDD" id="cd13897">
    <property type="entry name" value="CuRO_3_LCC_plant"/>
    <property type="match status" value="1"/>
</dbReference>
<dbReference type="FunFam" id="2.60.40.420:FF:000049">
    <property type="entry name" value="Laccase"/>
    <property type="match status" value="1"/>
</dbReference>
<dbReference type="FunFam" id="2.60.40.420:FF:000062">
    <property type="entry name" value="Laccase"/>
    <property type="match status" value="1"/>
</dbReference>
<dbReference type="Gene3D" id="2.60.40.420">
    <property type="entry name" value="Cupredoxins - blue copper proteins"/>
    <property type="match status" value="3"/>
</dbReference>
<dbReference type="InterPro" id="IPR011707">
    <property type="entry name" value="Cu-oxidase-like_N"/>
</dbReference>
<dbReference type="InterPro" id="IPR001117">
    <property type="entry name" value="Cu-oxidase_2nd"/>
</dbReference>
<dbReference type="InterPro" id="IPR011706">
    <property type="entry name" value="Cu-oxidase_C"/>
</dbReference>
<dbReference type="InterPro" id="IPR045087">
    <property type="entry name" value="Cu-oxidase_fam"/>
</dbReference>
<dbReference type="InterPro" id="IPR033138">
    <property type="entry name" value="Cu_oxidase_CS"/>
</dbReference>
<dbReference type="InterPro" id="IPR002355">
    <property type="entry name" value="Cu_oxidase_Cu_BS"/>
</dbReference>
<dbReference type="InterPro" id="IPR008972">
    <property type="entry name" value="Cupredoxin"/>
</dbReference>
<dbReference type="InterPro" id="IPR034288">
    <property type="entry name" value="CuRO_1_LCC"/>
</dbReference>
<dbReference type="InterPro" id="IPR034285">
    <property type="entry name" value="CuRO_2_LCC"/>
</dbReference>
<dbReference type="InterPro" id="IPR034289">
    <property type="entry name" value="CuRO_3_LCC"/>
</dbReference>
<dbReference type="InterPro" id="IPR017761">
    <property type="entry name" value="Laccase"/>
</dbReference>
<dbReference type="NCBIfam" id="TIGR03389">
    <property type="entry name" value="laccase"/>
    <property type="match status" value="1"/>
</dbReference>
<dbReference type="PANTHER" id="PTHR11709:SF452">
    <property type="entry name" value="LACCASE-2"/>
    <property type="match status" value="1"/>
</dbReference>
<dbReference type="PANTHER" id="PTHR11709">
    <property type="entry name" value="MULTI-COPPER OXIDASE"/>
    <property type="match status" value="1"/>
</dbReference>
<dbReference type="Pfam" id="PF00394">
    <property type="entry name" value="Cu-oxidase"/>
    <property type="match status" value="1"/>
</dbReference>
<dbReference type="Pfam" id="PF07731">
    <property type="entry name" value="Cu-oxidase_2"/>
    <property type="match status" value="1"/>
</dbReference>
<dbReference type="Pfam" id="PF07732">
    <property type="entry name" value="Cu-oxidase_3"/>
    <property type="match status" value="1"/>
</dbReference>
<dbReference type="SUPFAM" id="SSF49503">
    <property type="entry name" value="Cupredoxins"/>
    <property type="match status" value="3"/>
</dbReference>
<dbReference type="PROSITE" id="PS00079">
    <property type="entry name" value="MULTICOPPER_OXIDASE1"/>
    <property type="match status" value="1"/>
</dbReference>
<dbReference type="PROSITE" id="PS00080">
    <property type="entry name" value="MULTICOPPER_OXIDASE2"/>
    <property type="match status" value="1"/>
</dbReference>
<accession>Q8RYM9</accession>
<accession>A2ZVR5</accession>
<comment type="function">
    <text evidence="1">Lignin degradation and detoxification of lignin-derived products.</text>
</comment>
<comment type="catalytic activity">
    <reaction>
        <text>4 hydroquinone + O2 = 4 benzosemiquinone + 2 H2O</text>
        <dbReference type="Rhea" id="RHEA:11276"/>
        <dbReference type="ChEBI" id="CHEBI:15377"/>
        <dbReference type="ChEBI" id="CHEBI:15379"/>
        <dbReference type="ChEBI" id="CHEBI:17594"/>
        <dbReference type="ChEBI" id="CHEBI:17977"/>
        <dbReference type="EC" id="1.10.3.2"/>
    </reaction>
</comment>
<comment type="cofactor">
    <cofactor evidence="1">
        <name>Cu cation</name>
        <dbReference type="ChEBI" id="CHEBI:23378"/>
    </cofactor>
    <text evidence="1">Binds 4 Cu cations per monomer.</text>
</comment>
<comment type="subcellular location">
    <subcellularLocation>
        <location evidence="3">Secreted</location>
        <location evidence="3">Extracellular space</location>
        <location evidence="3">Apoplast</location>
    </subcellularLocation>
</comment>
<comment type="similarity">
    <text evidence="3">Belongs to the multicopper oxidase family.</text>
</comment>
<protein>
    <recommendedName>
        <fullName>Laccase-2</fullName>
        <ecNumber>1.10.3.2</ecNumber>
    </recommendedName>
    <alternativeName>
        <fullName>Benzenediol:oxygen oxidoreductase 2</fullName>
    </alternativeName>
    <alternativeName>
        <fullName>Diphenol oxidase 2</fullName>
    </alternativeName>
    <alternativeName>
        <fullName>Urishiol oxidase 2</fullName>
    </alternativeName>
</protein>
<organism>
    <name type="scientific">Oryza sativa subsp. japonica</name>
    <name type="common">Rice</name>
    <dbReference type="NCBI Taxonomy" id="39947"/>
    <lineage>
        <taxon>Eukaryota</taxon>
        <taxon>Viridiplantae</taxon>
        <taxon>Streptophyta</taxon>
        <taxon>Embryophyta</taxon>
        <taxon>Tracheophyta</taxon>
        <taxon>Spermatophyta</taxon>
        <taxon>Magnoliopsida</taxon>
        <taxon>Liliopsida</taxon>
        <taxon>Poales</taxon>
        <taxon>Poaceae</taxon>
        <taxon>BOP clade</taxon>
        <taxon>Oryzoideae</taxon>
        <taxon>Oryzeae</taxon>
        <taxon>Oryzinae</taxon>
        <taxon>Oryza</taxon>
        <taxon>Oryza sativa</taxon>
    </lineage>
</organism>
<name>LAC2_ORYSJ</name>